<protein>
    <recommendedName>
        <fullName>Low-density lipoprotein receptor-related protein 11</fullName>
        <shortName>LRP-11</shortName>
    </recommendedName>
</protein>
<proteinExistence type="evidence at protein level"/>
<keyword id="KW-0025">Alternative splicing</keyword>
<keyword id="KW-1015">Disulfide bond</keyword>
<keyword id="KW-0325">Glycoprotein</keyword>
<keyword id="KW-0472">Membrane</keyword>
<keyword id="KW-0597">Phosphoprotein</keyword>
<keyword id="KW-1267">Proteomics identification</keyword>
<keyword id="KW-0675">Receptor</keyword>
<keyword id="KW-1185">Reference proteome</keyword>
<keyword id="KW-0732">Signal</keyword>
<keyword id="KW-0812">Transmembrane</keyword>
<keyword id="KW-1133">Transmembrane helix</keyword>
<name>LRP11_HUMAN</name>
<accession>Q86VZ4</accession>
<accession>Q5VYC0</accession>
<accession>Q96SN6</accession>
<evidence type="ECO:0000250" key="1">
    <source>
        <dbReference type="UniProtKB" id="Q8CB67"/>
    </source>
</evidence>
<evidence type="ECO:0000255" key="2"/>
<evidence type="ECO:0000255" key="3">
    <source>
        <dbReference type="PROSITE-ProRule" id="PRU00124"/>
    </source>
</evidence>
<evidence type="ECO:0000255" key="4">
    <source>
        <dbReference type="PROSITE-ProRule" id="PRU00151"/>
    </source>
</evidence>
<evidence type="ECO:0000255" key="5">
    <source>
        <dbReference type="PROSITE-ProRule" id="PRU00341"/>
    </source>
</evidence>
<evidence type="ECO:0000256" key="6">
    <source>
        <dbReference type="SAM" id="MobiDB-lite"/>
    </source>
</evidence>
<evidence type="ECO:0000269" key="7">
    <source>
    </source>
</evidence>
<evidence type="ECO:0000303" key="8">
    <source>
    </source>
</evidence>
<evidence type="ECO:0000305" key="9"/>
<comment type="subcellular location">
    <subcellularLocation>
        <location evidence="9">Membrane</location>
        <topology evidence="9">Single-pass type I membrane protein</topology>
    </subcellularLocation>
</comment>
<comment type="alternative products">
    <event type="alternative splicing"/>
    <isoform>
        <id>Q86VZ4-1</id>
        <name>1</name>
        <sequence type="displayed"/>
    </isoform>
    <isoform>
        <id>Q86VZ4-2</id>
        <name>2</name>
        <sequence type="described" ref="VSP_017535 VSP_017536"/>
    </isoform>
</comment>
<comment type="similarity">
    <text evidence="9">Belongs to the LDLR family.</text>
</comment>
<sequence>MASVAQESAGSQRRLPPRHGALRGLLLLCLWLPSGRAALPPAAPLSELHAQLSGVEQLLEEFRRQLQQERPQEELELELRAGGGPQEDCPGPGSGGYSAMPDAIIRTKDSLAAGASFLRAPAAVRGWRQCVAACCSEPRCSVAVVELPRRPAPPAAVLGCYLFNCTARGRNVCKFALHSGYSSYSLSRAPDGAALATARASPRQEKDAPPLSKAGQDVVLHLPTDGVVLDGRESTDDHAIVQYEWALLQGDPSVDMKVPQSGTLKLSHLQEGTYTFQLTVTDTAGQRSSDNVSVTVLRAAYSTGGCLHTCSRYHFFCDDGCCIDITLACDGVQQCPDGSDEDFCQNLGLDRKMVTHTAASPALPRTTGPSEDAGGDSLVEKSQKATAPNKPPALSNTEKRNHSAFWGPESQIIPVMPDSSSSGKNRKEESYIFESKGDGGGGEHPAPETGAVLPLALGLAITALLLLMVACRLRLVKQKLKKARPITSEESDYLINGMYL</sequence>
<reference key="1">
    <citation type="journal article" date="2004" name="Nat. Genet.">
        <title>Complete sequencing and characterization of 21,243 full-length human cDNAs.</title>
        <authorList>
            <person name="Ota T."/>
            <person name="Suzuki Y."/>
            <person name="Nishikawa T."/>
            <person name="Otsuki T."/>
            <person name="Sugiyama T."/>
            <person name="Irie R."/>
            <person name="Wakamatsu A."/>
            <person name="Hayashi K."/>
            <person name="Sato H."/>
            <person name="Nagai K."/>
            <person name="Kimura K."/>
            <person name="Makita H."/>
            <person name="Sekine M."/>
            <person name="Obayashi M."/>
            <person name="Nishi T."/>
            <person name="Shibahara T."/>
            <person name="Tanaka T."/>
            <person name="Ishii S."/>
            <person name="Yamamoto J."/>
            <person name="Saito K."/>
            <person name="Kawai Y."/>
            <person name="Isono Y."/>
            <person name="Nakamura Y."/>
            <person name="Nagahari K."/>
            <person name="Murakami K."/>
            <person name="Yasuda T."/>
            <person name="Iwayanagi T."/>
            <person name="Wagatsuma M."/>
            <person name="Shiratori A."/>
            <person name="Sudo H."/>
            <person name="Hosoiri T."/>
            <person name="Kaku Y."/>
            <person name="Kodaira H."/>
            <person name="Kondo H."/>
            <person name="Sugawara M."/>
            <person name="Takahashi M."/>
            <person name="Kanda K."/>
            <person name="Yokoi T."/>
            <person name="Furuya T."/>
            <person name="Kikkawa E."/>
            <person name="Omura Y."/>
            <person name="Abe K."/>
            <person name="Kamihara K."/>
            <person name="Katsuta N."/>
            <person name="Sato K."/>
            <person name="Tanikawa M."/>
            <person name="Yamazaki M."/>
            <person name="Ninomiya K."/>
            <person name="Ishibashi T."/>
            <person name="Yamashita H."/>
            <person name="Murakawa K."/>
            <person name="Fujimori K."/>
            <person name="Tanai H."/>
            <person name="Kimata M."/>
            <person name="Watanabe M."/>
            <person name="Hiraoka S."/>
            <person name="Chiba Y."/>
            <person name="Ishida S."/>
            <person name="Ono Y."/>
            <person name="Takiguchi S."/>
            <person name="Watanabe S."/>
            <person name="Yosida M."/>
            <person name="Hotuta T."/>
            <person name="Kusano J."/>
            <person name="Kanehori K."/>
            <person name="Takahashi-Fujii A."/>
            <person name="Hara H."/>
            <person name="Tanase T.-O."/>
            <person name="Nomura Y."/>
            <person name="Togiya S."/>
            <person name="Komai F."/>
            <person name="Hara R."/>
            <person name="Takeuchi K."/>
            <person name="Arita M."/>
            <person name="Imose N."/>
            <person name="Musashino K."/>
            <person name="Yuuki H."/>
            <person name="Oshima A."/>
            <person name="Sasaki N."/>
            <person name="Aotsuka S."/>
            <person name="Yoshikawa Y."/>
            <person name="Matsunawa H."/>
            <person name="Ichihara T."/>
            <person name="Shiohata N."/>
            <person name="Sano S."/>
            <person name="Moriya S."/>
            <person name="Momiyama H."/>
            <person name="Satoh N."/>
            <person name="Takami S."/>
            <person name="Terashima Y."/>
            <person name="Suzuki O."/>
            <person name="Nakagawa S."/>
            <person name="Senoh A."/>
            <person name="Mizoguchi H."/>
            <person name="Goto Y."/>
            <person name="Shimizu F."/>
            <person name="Wakebe H."/>
            <person name="Hishigaki H."/>
            <person name="Watanabe T."/>
            <person name="Sugiyama A."/>
            <person name="Takemoto M."/>
            <person name="Kawakami B."/>
            <person name="Yamazaki M."/>
            <person name="Watanabe K."/>
            <person name="Kumagai A."/>
            <person name="Itakura S."/>
            <person name="Fukuzumi Y."/>
            <person name="Fujimori Y."/>
            <person name="Komiyama M."/>
            <person name="Tashiro H."/>
            <person name="Tanigami A."/>
            <person name="Fujiwara T."/>
            <person name="Ono T."/>
            <person name="Yamada K."/>
            <person name="Fujii Y."/>
            <person name="Ozaki K."/>
            <person name="Hirao M."/>
            <person name="Ohmori Y."/>
            <person name="Kawabata A."/>
            <person name="Hikiji T."/>
            <person name="Kobatake N."/>
            <person name="Inagaki H."/>
            <person name="Ikema Y."/>
            <person name="Okamoto S."/>
            <person name="Okitani R."/>
            <person name="Kawakami T."/>
            <person name="Noguchi S."/>
            <person name="Itoh T."/>
            <person name="Shigeta K."/>
            <person name="Senba T."/>
            <person name="Matsumura K."/>
            <person name="Nakajima Y."/>
            <person name="Mizuno T."/>
            <person name="Morinaga M."/>
            <person name="Sasaki M."/>
            <person name="Togashi T."/>
            <person name="Oyama M."/>
            <person name="Hata H."/>
            <person name="Watanabe M."/>
            <person name="Komatsu T."/>
            <person name="Mizushima-Sugano J."/>
            <person name="Satoh T."/>
            <person name="Shirai Y."/>
            <person name="Takahashi Y."/>
            <person name="Nakagawa K."/>
            <person name="Okumura K."/>
            <person name="Nagase T."/>
            <person name="Nomura N."/>
            <person name="Kikuchi H."/>
            <person name="Masuho Y."/>
            <person name="Yamashita R."/>
            <person name="Nakai K."/>
            <person name="Yada T."/>
            <person name="Nakamura Y."/>
            <person name="Ohara O."/>
            <person name="Isogai T."/>
            <person name="Sugano S."/>
        </authorList>
    </citation>
    <scope>NUCLEOTIDE SEQUENCE [LARGE SCALE MRNA] (ISOFORM 1)</scope>
</reference>
<reference key="2">
    <citation type="journal article" date="2003" name="Nature">
        <title>The DNA sequence and analysis of human chromosome 6.</title>
        <authorList>
            <person name="Mungall A.J."/>
            <person name="Palmer S.A."/>
            <person name="Sims S.K."/>
            <person name="Edwards C.A."/>
            <person name="Ashurst J.L."/>
            <person name="Wilming L."/>
            <person name="Jones M.C."/>
            <person name="Horton R."/>
            <person name="Hunt S.E."/>
            <person name="Scott C.E."/>
            <person name="Gilbert J.G.R."/>
            <person name="Clamp M.E."/>
            <person name="Bethel G."/>
            <person name="Milne S."/>
            <person name="Ainscough R."/>
            <person name="Almeida J.P."/>
            <person name="Ambrose K.D."/>
            <person name="Andrews T.D."/>
            <person name="Ashwell R.I.S."/>
            <person name="Babbage A.K."/>
            <person name="Bagguley C.L."/>
            <person name="Bailey J."/>
            <person name="Banerjee R."/>
            <person name="Barker D.J."/>
            <person name="Barlow K.F."/>
            <person name="Bates K."/>
            <person name="Beare D.M."/>
            <person name="Beasley H."/>
            <person name="Beasley O."/>
            <person name="Bird C.P."/>
            <person name="Blakey S.E."/>
            <person name="Bray-Allen S."/>
            <person name="Brook J."/>
            <person name="Brown A.J."/>
            <person name="Brown J.Y."/>
            <person name="Burford D.C."/>
            <person name="Burrill W."/>
            <person name="Burton J."/>
            <person name="Carder C."/>
            <person name="Carter N.P."/>
            <person name="Chapman J.C."/>
            <person name="Clark S.Y."/>
            <person name="Clark G."/>
            <person name="Clee C.M."/>
            <person name="Clegg S."/>
            <person name="Cobley V."/>
            <person name="Collier R.E."/>
            <person name="Collins J.E."/>
            <person name="Colman L.K."/>
            <person name="Corby N.R."/>
            <person name="Coville G.J."/>
            <person name="Culley K.M."/>
            <person name="Dhami P."/>
            <person name="Davies J."/>
            <person name="Dunn M."/>
            <person name="Earthrowl M.E."/>
            <person name="Ellington A.E."/>
            <person name="Evans K.A."/>
            <person name="Faulkner L."/>
            <person name="Francis M.D."/>
            <person name="Frankish A."/>
            <person name="Frankland J."/>
            <person name="French L."/>
            <person name="Garner P."/>
            <person name="Garnett J."/>
            <person name="Ghori M.J."/>
            <person name="Gilby L.M."/>
            <person name="Gillson C.J."/>
            <person name="Glithero R.J."/>
            <person name="Grafham D.V."/>
            <person name="Grant M."/>
            <person name="Gribble S."/>
            <person name="Griffiths C."/>
            <person name="Griffiths M.N.D."/>
            <person name="Hall R."/>
            <person name="Halls K.S."/>
            <person name="Hammond S."/>
            <person name="Harley J.L."/>
            <person name="Hart E.A."/>
            <person name="Heath P.D."/>
            <person name="Heathcott R."/>
            <person name="Holmes S.J."/>
            <person name="Howden P.J."/>
            <person name="Howe K.L."/>
            <person name="Howell G.R."/>
            <person name="Huckle E."/>
            <person name="Humphray S.J."/>
            <person name="Humphries M.D."/>
            <person name="Hunt A.R."/>
            <person name="Johnson C.M."/>
            <person name="Joy A.A."/>
            <person name="Kay M."/>
            <person name="Keenan S.J."/>
            <person name="Kimberley A.M."/>
            <person name="King A."/>
            <person name="Laird G.K."/>
            <person name="Langford C."/>
            <person name="Lawlor S."/>
            <person name="Leongamornlert D.A."/>
            <person name="Leversha M."/>
            <person name="Lloyd C.R."/>
            <person name="Lloyd D.M."/>
            <person name="Loveland J.E."/>
            <person name="Lovell J."/>
            <person name="Martin S."/>
            <person name="Mashreghi-Mohammadi M."/>
            <person name="Maslen G.L."/>
            <person name="Matthews L."/>
            <person name="McCann O.T."/>
            <person name="McLaren S.J."/>
            <person name="McLay K."/>
            <person name="McMurray A."/>
            <person name="Moore M.J.F."/>
            <person name="Mullikin J.C."/>
            <person name="Niblett D."/>
            <person name="Nickerson T."/>
            <person name="Novik K.L."/>
            <person name="Oliver K."/>
            <person name="Overton-Larty E.K."/>
            <person name="Parker A."/>
            <person name="Patel R."/>
            <person name="Pearce A.V."/>
            <person name="Peck A.I."/>
            <person name="Phillimore B.J.C.T."/>
            <person name="Phillips S."/>
            <person name="Plumb R.W."/>
            <person name="Porter K.M."/>
            <person name="Ramsey Y."/>
            <person name="Ranby S.A."/>
            <person name="Rice C.M."/>
            <person name="Ross M.T."/>
            <person name="Searle S.M."/>
            <person name="Sehra H.K."/>
            <person name="Sheridan E."/>
            <person name="Skuce C.D."/>
            <person name="Smith S."/>
            <person name="Smith M."/>
            <person name="Spraggon L."/>
            <person name="Squares S.L."/>
            <person name="Steward C.A."/>
            <person name="Sycamore N."/>
            <person name="Tamlyn-Hall G."/>
            <person name="Tester J."/>
            <person name="Theaker A.J."/>
            <person name="Thomas D.W."/>
            <person name="Thorpe A."/>
            <person name="Tracey A."/>
            <person name="Tromans A."/>
            <person name="Tubby B."/>
            <person name="Wall M."/>
            <person name="Wallis J.M."/>
            <person name="West A.P."/>
            <person name="White S.S."/>
            <person name="Whitehead S.L."/>
            <person name="Whittaker H."/>
            <person name="Wild A."/>
            <person name="Willey D.J."/>
            <person name="Wilmer T.E."/>
            <person name="Wood J.M."/>
            <person name="Wray P.W."/>
            <person name="Wyatt J.C."/>
            <person name="Young L."/>
            <person name="Younger R.M."/>
            <person name="Bentley D.R."/>
            <person name="Coulson A."/>
            <person name="Durbin R.M."/>
            <person name="Hubbard T."/>
            <person name="Sulston J.E."/>
            <person name="Dunham I."/>
            <person name="Rogers J."/>
            <person name="Beck S."/>
        </authorList>
    </citation>
    <scope>NUCLEOTIDE SEQUENCE [LARGE SCALE GENOMIC DNA]</scope>
</reference>
<reference key="3">
    <citation type="journal article" date="2004" name="Genome Res.">
        <title>The status, quality, and expansion of the NIH full-length cDNA project: the Mammalian Gene Collection (MGC).</title>
        <authorList>
            <consortium name="The MGC Project Team"/>
        </authorList>
    </citation>
    <scope>NUCLEOTIDE SEQUENCE [LARGE SCALE MRNA] (ISOFORMS 1 AND 2)</scope>
    <scope>VARIANTS ARG-92 AND HIS-351</scope>
    <source>
        <tissue>Brain</tissue>
        <tissue>Skin</tissue>
    </source>
</reference>
<organism>
    <name type="scientific">Homo sapiens</name>
    <name type="common">Human</name>
    <dbReference type="NCBI Taxonomy" id="9606"/>
    <lineage>
        <taxon>Eukaryota</taxon>
        <taxon>Metazoa</taxon>
        <taxon>Chordata</taxon>
        <taxon>Craniata</taxon>
        <taxon>Vertebrata</taxon>
        <taxon>Euteleostomi</taxon>
        <taxon>Mammalia</taxon>
        <taxon>Eutheria</taxon>
        <taxon>Euarchontoglires</taxon>
        <taxon>Primates</taxon>
        <taxon>Haplorrhini</taxon>
        <taxon>Catarrhini</taxon>
        <taxon>Hominidae</taxon>
        <taxon>Homo</taxon>
    </lineage>
</organism>
<dbReference type="EMBL" id="AK027641">
    <property type="protein sequence ID" value="BAB55257.1"/>
    <property type="molecule type" value="mRNA"/>
</dbReference>
<dbReference type="EMBL" id="AL355312">
    <property type="status" value="NOT_ANNOTATED_CDS"/>
    <property type="molecule type" value="Genomic_DNA"/>
</dbReference>
<dbReference type="EMBL" id="BC025239">
    <property type="protein sequence ID" value="AAH25239.1"/>
    <property type="molecule type" value="mRNA"/>
</dbReference>
<dbReference type="EMBL" id="BC043141">
    <property type="protein sequence ID" value="AAH43141.1"/>
    <property type="molecule type" value="mRNA"/>
</dbReference>
<dbReference type="CCDS" id="CCDS5220.1">
    <molecule id="Q86VZ4-1"/>
</dbReference>
<dbReference type="RefSeq" id="NP_116221.3">
    <molecule id="Q86VZ4-1"/>
    <property type="nucleotide sequence ID" value="NM_032832.5"/>
</dbReference>
<dbReference type="BioGRID" id="124354">
    <property type="interactions" value="42"/>
</dbReference>
<dbReference type="FunCoup" id="Q86VZ4">
    <property type="interactions" value="1058"/>
</dbReference>
<dbReference type="IntAct" id="Q86VZ4">
    <property type="interactions" value="36"/>
</dbReference>
<dbReference type="STRING" id="9606.ENSP00000239367"/>
<dbReference type="GlyCosmos" id="Q86VZ4">
    <property type="glycosylation" value="4 sites, 1 glycan"/>
</dbReference>
<dbReference type="GlyGen" id="Q86VZ4">
    <property type="glycosylation" value="13 sites, 5 N-linked glycans (3 sites), 2 O-linked glycans (10 sites)"/>
</dbReference>
<dbReference type="iPTMnet" id="Q86VZ4"/>
<dbReference type="PhosphoSitePlus" id="Q86VZ4"/>
<dbReference type="SwissPalm" id="Q86VZ4"/>
<dbReference type="BioMuta" id="LRP11"/>
<dbReference type="DMDM" id="92058704"/>
<dbReference type="jPOST" id="Q86VZ4"/>
<dbReference type="MassIVE" id="Q86VZ4"/>
<dbReference type="PaxDb" id="9606-ENSP00000239367"/>
<dbReference type="PeptideAtlas" id="Q86VZ4"/>
<dbReference type="ProteomicsDB" id="70094">
    <molecule id="Q86VZ4-1"/>
</dbReference>
<dbReference type="ProteomicsDB" id="70095">
    <molecule id="Q86VZ4-2"/>
</dbReference>
<dbReference type="Pumba" id="Q86VZ4"/>
<dbReference type="TopDownProteomics" id="Q86VZ4-1">
    <molecule id="Q86VZ4-1"/>
</dbReference>
<dbReference type="Antibodypedia" id="33293">
    <property type="antibodies" value="81 antibodies from 25 providers"/>
</dbReference>
<dbReference type="DNASU" id="84918"/>
<dbReference type="Ensembl" id="ENST00000239367.7">
    <molecule id="Q86VZ4-1"/>
    <property type="protein sequence ID" value="ENSP00000239367.2"/>
    <property type="gene ID" value="ENSG00000120256.11"/>
</dbReference>
<dbReference type="GeneID" id="84918"/>
<dbReference type="KEGG" id="hsa:84918"/>
<dbReference type="MANE-Select" id="ENST00000239367.7">
    <property type="protein sequence ID" value="ENSP00000239367.2"/>
    <property type="RefSeq nucleotide sequence ID" value="NM_032832.6"/>
    <property type="RefSeq protein sequence ID" value="NP_116221.3"/>
</dbReference>
<dbReference type="UCSC" id="uc003qng.3">
    <molecule id="Q86VZ4-1"/>
    <property type="organism name" value="human"/>
</dbReference>
<dbReference type="AGR" id="HGNC:16936"/>
<dbReference type="CTD" id="84918"/>
<dbReference type="DisGeNET" id="84918"/>
<dbReference type="GeneCards" id="LRP11"/>
<dbReference type="HGNC" id="HGNC:16936">
    <property type="gene designation" value="LRP11"/>
</dbReference>
<dbReference type="HPA" id="ENSG00000120256">
    <property type="expression patterns" value="Low tissue specificity"/>
</dbReference>
<dbReference type="neXtProt" id="NX_Q86VZ4"/>
<dbReference type="OpenTargets" id="ENSG00000120256"/>
<dbReference type="PharmGKB" id="PA134880462"/>
<dbReference type="VEuPathDB" id="HostDB:ENSG00000120256"/>
<dbReference type="eggNOG" id="ENOG502QW7V">
    <property type="taxonomic scope" value="Eukaryota"/>
</dbReference>
<dbReference type="GeneTree" id="ENSGT00940000161275"/>
<dbReference type="HOGENOM" id="CLU_042674_1_0_1"/>
<dbReference type="InParanoid" id="Q86VZ4"/>
<dbReference type="OMA" id="HACCAQP"/>
<dbReference type="OrthoDB" id="10037294at2759"/>
<dbReference type="PAN-GO" id="Q86VZ4">
    <property type="GO annotations" value="0 GO annotations based on evolutionary models"/>
</dbReference>
<dbReference type="PhylomeDB" id="Q86VZ4"/>
<dbReference type="TreeFam" id="TF325867"/>
<dbReference type="PathwayCommons" id="Q86VZ4"/>
<dbReference type="SignaLink" id="Q86VZ4"/>
<dbReference type="BioGRID-ORCS" id="84918">
    <property type="hits" value="11 hits in 1164 CRISPR screens"/>
</dbReference>
<dbReference type="ChiTaRS" id="LRP11">
    <property type="organism name" value="human"/>
</dbReference>
<dbReference type="GenomeRNAi" id="84918"/>
<dbReference type="Pharos" id="Q86VZ4">
    <property type="development level" value="Tbio"/>
</dbReference>
<dbReference type="PRO" id="PR:Q86VZ4"/>
<dbReference type="Proteomes" id="UP000005640">
    <property type="component" value="Chromosome 6"/>
</dbReference>
<dbReference type="RNAct" id="Q86VZ4">
    <property type="molecule type" value="protein"/>
</dbReference>
<dbReference type="Bgee" id="ENSG00000120256">
    <property type="expression patterns" value="Expressed in islet of Langerhans and 100 other cell types or tissues"/>
</dbReference>
<dbReference type="ExpressionAtlas" id="Q86VZ4">
    <property type="expression patterns" value="baseline and differential"/>
</dbReference>
<dbReference type="GO" id="GO:0005886">
    <property type="term" value="C:plasma membrane"/>
    <property type="evidence" value="ECO:0000305"/>
    <property type="project" value="AgBase"/>
</dbReference>
<dbReference type="GO" id="GO:0051219">
    <property type="term" value="F:phosphoprotein binding"/>
    <property type="evidence" value="ECO:0000315"/>
    <property type="project" value="AgBase"/>
</dbReference>
<dbReference type="GO" id="GO:0033555">
    <property type="term" value="P:multicellular organismal response to stress"/>
    <property type="evidence" value="ECO:0007669"/>
    <property type="project" value="Ensembl"/>
</dbReference>
<dbReference type="GO" id="GO:0009409">
    <property type="term" value="P:response to cold"/>
    <property type="evidence" value="ECO:0007669"/>
    <property type="project" value="Ensembl"/>
</dbReference>
<dbReference type="GO" id="GO:0009408">
    <property type="term" value="P:response to heat"/>
    <property type="evidence" value="ECO:0007669"/>
    <property type="project" value="Ensembl"/>
</dbReference>
<dbReference type="GO" id="GO:0035902">
    <property type="term" value="P:response to immobilization stress"/>
    <property type="evidence" value="ECO:0007669"/>
    <property type="project" value="Ensembl"/>
</dbReference>
<dbReference type="GO" id="GO:0009612">
    <property type="term" value="P:response to mechanical stimulus"/>
    <property type="evidence" value="ECO:0007669"/>
    <property type="project" value="Ensembl"/>
</dbReference>
<dbReference type="GO" id="GO:0042594">
    <property type="term" value="P:response to starvation"/>
    <property type="evidence" value="ECO:0007669"/>
    <property type="project" value="Ensembl"/>
</dbReference>
<dbReference type="GO" id="GO:0009414">
    <property type="term" value="P:response to water deprivation"/>
    <property type="evidence" value="ECO:0007669"/>
    <property type="project" value="Ensembl"/>
</dbReference>
<dbReference type="CDD" id="cd00112">
    <property type="entry name" value="LDLa"/>
    <property type="match status" value="1"/>
</dbReference>
<dbReference type="CDD" id="cd00146">
    <property type="entry name" value="PKD"/>
    <property type="match status" value="1"/>
</dbReference>
<dbReference type="FunFam" id="2.60.40.10:FF:000061">
    <property type="entry name" value="Dyslexia-associated protein KIAA0319 homolog"/>
    <property type="match status" value="1"/>
</dbReference>
<dbReference type="FunFam" id="4.10.400.10:FF:000067">
    <property type="entry name" value="Serine peptidase inhibitor, Kunitz type 1"/>
    <property type="match status" value="1"/>
</dbReference>
<dbReference type="Gene3D" id="2.60.40.10">
    <property type="entry name" value="Immunoglobulins"/>
    <property type="match status" value="1"/>
</dbReference>
<dbReference type="Gene3D" id="4.10.400.10">
    <property type="entry name" value="Low-density Lipoprotein Receptor"/>
    <property type="match status" value="1"/>
</dbReference>
<dbReference type="InterPro" id="IPR013783">
    <property type="entry name" value="Ig-like_fold"/>
</dbReference>
<dbReference type="InterPro" id="IPR036055">
    <property type="entry name" value="LDL_receptor-like_sf"/>
</dbReference>
<dbReference type="InterPro" id="IPR023415">
    <property type="entry name" value="LDLR_class-A_CS"/>
</dbReference>
<dbReference type="InterPro" id="IPR002172">
    <property type="entry name" value="LDrepeatLR_classA_rpt"/>
</dbReference>
<dbReference type="InterPro" id="IPR013980">
    <property type="entry name" value="MANSC_dom"/>
</dbReference>
<dbReference type="InterPro" id="IPR011106">
    <property type="entry name" value="MANSC_N"/>
</dbReference>
<dbReference type="InterPro" id="IPR022409">
    <property type="entry name" value="PKD/Chitinase_dom"/>
</dbReference>
<dbReference type="InterPro" id="IPR000601">
    <property type="entry name" value="PKD_dom"/>
</dbReference>
<dbReference type="InterPro" id="IPR035986">
    <property type="entry name" value="PKD_dom_sf"/>
</dbReference>
<dbReference type="PANTHER" id="PTHR46876">
    <property type="entry name" value="LOW-DENSITY LIPOPROTEIN RECEPTOR-RELATED PROTEIN 11"/>
    <property type="match status" value="1"/>
</dbReference>
<dbReference type="PANTHER" id="PTHR46876:SF1">
    <property type="entry name" value="LOW-DENSITY LIPOPROTEIN RECEPTOR-RELATED PROTEIN 11"/>
    <property type="match status" value="1"/>
</dbReference>
<dbReference type="Pfam" id="PF22352">
    <property type="entry name" value="K319L-like_PKD"/>
    <property type="match status" value="1"/>
</dbReference>
<dbReference type="Pfam" id="PF00057">
    <property type="entry name" value="Ldl_recept_a"/>
    <property type="match status" value="1"/>
</dbReference>
<dbReference type="Pfam" id="PF07502">
    <property type="entry name" value="MANEC"/>
    <property type="match status" value="1"/>
</dbReference>
<dbReference type="SMART" id="SM00192">
    <property type="entry name" value="LDLa"/>
    <property type="match status" value="1"/>
</dbReference>
<dbReference type="SMART" id="SM00765">
    <property type="entry name" value="MANEC"/>
    <property type="match status" value="1"/>
</dbReference>
<dbReference type="SMART" id="SM00089">
    <property type="entry name" value="PKD"/>
    <property type="match status" value="1"/>
</dbReference>
<dbReference type="SUPFAM" id="SSF57424">
    <property type="entry name" value="LDL receptor-like module"/>
    <property type="match status" value="1"/>
</dbReference>
<dbReference type="SUPFAM" id="SSF49299">
    <property type="entry name" value="PKD domain"/>
    <property type="match status" value="1"/>
</dbReference>
<dbReference type="PROSITE" id="PS01209">
    <property type="entry name" value="LDLRA_1"/>
    <property type="match status" value="1"/>
</dbReference>
<dbReference type="PROSITE" id="PS50068">
    <property type="entry name" value="LDLRA_2"/>
    <property type="match status" value="1"/>
</dbReference>
<dbReference type="PROSITE" id="PS50986">
    <property type="entry name" value="MANSC"/>
    <property type="match status" value="1"/>
</dbReference>
<dbReference type="PROSITE" id="PS50093">
    <property type="entry name" value="PKD"/>
    <property type="match status" value="1"/>
</dbReference>
<gene>
    <name type="primary">LRP11</name>
</gene>
<feature type="signal peptide" evidence="2">
    <location>
        <begin position="1"/>
        <end position="37"/>
    </location>
</feature>
<feature type="chain" id="PRO_0000017337" description="Low-density lipoprotein receptor-related protein 11">
    <location>
        <begin position="38"/>
        <end position="500"/>
    </location>
</feature>
<feature type="topological domain" description="Extracellular" evidence="2">
    <location>
        <begin position="38"/>
        <end position="450"/>
    </location>
</feature>
<feature type="transmembrane region" description="Helical" evidence="2">
    <location>
        <begin position="451"/>
        <end position="473"/>
    </location>
</feature>
<feature type="topological domain" description="Cytoplasmic" evidence="2">
    <location>
        <begin position="474"/>
        <end position="500"/>
    </location>
</feature>
<feature type="domain" description="MANSC" evidence="5">
    <location>
        <begin position="99"/>
        <end position="184"/>
    </location>
</feature>
<feature type="domain" description="PKD" evidence="4">
    <location>
        <begin position="210"/>
        <end position="305"/>
    </location>
</feature>
<feature type="domain" description="LDL-receptor class A" evidence="3">
    <location>
        <begin position="309"/>
        <end position="345"/>
    </location>
</feature>
<feature type="region of interest" description="Disordered" evidence="6">
    <location>
        <begin position="358"/>
        <end position="445"/>
    </location>
</feature>
<feature type="modified residue" description="Phosphoserine" evidence="1">
    <location>
        <position position="491"/>
    </location>
</feature>
<feature type="glycosylation site" description="N-linked (GlcNAc...) asparagine" evidence="2">
    <location>
        <position position="164"/>
    </location>
</feature>
<feature type="glycosylation site" description="N-linked (GlcNAc...) asparagine" evidence="2">
    <location>
        <position position="291"/>
    </location>
</feature>
<feature type="glycosylation site" description="N-linked (GlcNAc...) asparagine" evidence="2">
    <location>
        <position position="401"/>
    </location>
</feature>
<feature type="disulfide bond" evidence="3">
    <location>
        <begin position="310"/>
        <end position="322"/>
    </location>
</feature>
<feature type="disulfide bond" evidence="3">
    <location>
        <begin position="317"/>
        <end position="335"/>
    </location>
</feature>
<feature type="disulfide bond" evidence="3">
    <location>
        <begin position="329"/>
        <end position="344"/>
    </location>
</feature>
<feature type="splice variant" id="VSP_017535" description="In isoform 2." evidence="8">
    <original>EKDAPPLSKAGQDVVLHLPTDGVVLDGRESTDD</original>
    <variation>GKRATEGPALARALETRSALAKLEAKHTRAKLF</variation>
    <location>
        <begin position="205"/>
        <end position="237"/>
    </location>
</feature>
<feature type="splice variant" id="VSP_017536" description="In isoform 2." evidence="8">
    <location>
        <begin position="238"/>
        <end position="500"/>
    </location>
</feature>
<feature type="sequence variant" id="VAR_025537" description="In dbSNP:rs9322225." evidence="7">
    <original>P</original>
    <variation>R</variation>
    <location>
        <position position="92"/>
    </location>
</feature>
<feature type="sequence variant" id="VAR_056002" description="In dbSNP:rs9478945.">
    <original>T</original>
    <variation>M</variation>
    <location>
        <position position="281"/>
    </location>
</feature>
<feature type="sequence variant" id="VAR_025538" description="In dbSNP:rs17854254." evidence="7">
    <original>R</original>
    <variation>H</variation>
    <location>
        <position position="351"/>
    </location>
</feature>
<feature type="sequence variant" id="VAR_056003" description="In dbSNP:rs9478144.">
    <original>G</original>
    <variation>R</variation>
    <location>
        <position position="442"/>
    </location>
</feature>